<accession>O99256</accession>
<reference key="1">
    <citation type="submission" date="1997-07" db="EMBL/GenBank/DDBJ databases">
        <authorList>
            <person name="Tan T.M.C."/>
            <person name="Noviyanti R."/>
            <person name="Syafruddi N."/>
            <person name="Marzuki S."/>
            <person name="Ting R.C.Y."/>
        </authorList>
    </citation>
    <scope>NUCLEOTIDE SEQUENCE [GENOMIC DNA]</scope>
</reference>
<proteinExistence type="inferred from homology"/>
<geneLocation type="mitochondrion"/>
<sequence length="376" mass="43390">MNYNSINLVKTHLMNYPCPLNINFLWNYGFLLGIIFFIQILTGVFLASRYSPEISYAYYSIQHILRELWSGWCFRYMHATGASLVFFLTYLHILRGLNYSYLYLPLSWISGLIIFALFIVTAFIGYVLPWGQMSYWGATVITNLLSGIPALVIWLCGGYTVSDPTIKRFFVLHFILPFVALCIVFIHIFFLHLHGSTNPLGYDTALKIPFYPNLLSLDVKGFNNILILFLIQSIFGVIPLSHPDNAIIVNTYVTPLQIVPEWYFLPFYAMLKTIPSKNAGLVIVVASLQLLFLLAEQRNLTTIIQFKMVFSAREYSVPIIWFMCSFYALLWIGCQLPQDIFILYGRLFIILFFSSGLFALVHYKRTHYDYSSQANI</sequence>
<dbReference type="EMBL" id="AF014116">
    <property type="protein sequence ID" value="AAD01529.1"/>
    <property type="molecule type" value="Genomic_DNA"/>
</dbReference>
<dbReference type="SMR" id="O99256"/>
<dbReference type="VEuPathDB" id="PlasmoDB:PCHAS_MIT01800"/>
<dbReference type="GO" id="GO:0005743">
    <property type="term" value="C:mitochondrial inner membrane"/>
    <property type="evidence" value="ECO:0007669"/>
    <property type="project" value="UniProtKB-SubCell"/>
</dbReference>
<dbReference type="GO" id="GO:0046872">
    <property type="term" value="F:metal ion binding"/>
    <property type="evidence" value="ECO:0007669"/>
    <property type="project" value="UniProtKB-KW"/>
</dbReference>
<dbReference type="GO" id="GO:0008121">
    <property type="term" value="F:ubiquinol-cytochrome-c reductase activity"/>
    <property type="evidence" value="ECO:0007669"/>
    <property type="project" value="TreeGrafter"/>
</dbReference>
<dbReference type="GO" id="GO:0006122">
    <property type="term" value="P:mitochondrial electron transport, ubiquinol to cytochrome c"/>
    <property type="evidence" value="ECO:0007669"/>
    <property type="project" value="TreeGrafter"/>
</dbReference>
<dbReference type="CDD" id="cd00284">
    <property type="entry name" value="Cytochrome_b_N"/>
    <property type="match status" value="1"/>
</dbReference>
<dbReference type="FunFam" id="1.20.810.10:FF:000008">
    <property type="entry name" value="Cytochrome b"/>
    <property type="match status" value="1"/>
</dbReference>
<dbReference type="Gene3D" id="1.20.810.10">
    <property type="entry name" value="Cytochrome Bc1 Complex, Chain C"/>
    <property type="match status" value="1"/>
</dbReference>
<dbReference type="InterPro" id="IPR005798">
    <property type="entry name" value="Cyt_b/b6_C"/>
</dbReference>
<dbReference type="InterPro" id="IPR036150">
    <property type="entry name" value="Cyt_b/b6_C_sf"/>
</dbReference>
<dbReference type="InterPro" id="IPR005797">
    <property type="entry name" value="Cyt_b/b6_N"/>
</dbReference>
<dbReference type="InterPro" id="IPR027387">
    <property type="entry name" value="Cytb/b6-like_sf"/>
</dbReference>
<dbReference type="InterPro" id="IPR048259">
    <property type="entry name" value="Cytochrome_b_N_euk/bac"/>
</dbReference>
<dbReference type="InterPro" id="IPR016174">
    <property type="entry name" value="Di-haem_cyt_TM"/>
</dbReference>
<dbReference type="PANTHER" id="PTHR19271">
    <property type="entry name" value="CYTOCHROME B"/>
    <property type="match status" value="1"/>
</dbReference>
<dbReference type="PANTHER" id="PTHR19271:SF16">
    <property type="entry name" value="CYTOCHROME B"/>
    <property type="match status" value="1"/>
</dbReference>
<dbReference type="Pfam" id="PF00032">
    <property type="entry name" value="Cytochrom_B_C"/>
    <property type="match status" value="1"/>
</dbReference>
<dbReference type="Pfam" id="PF00033">
    <property type="entry name" value="Cytochrome_B"/>
    <property type="match status" value="1"/>
</dbReference>
<dbReference type="SUPFAM" id="SSF81648">
    <property type="entry name" value="a domain/subunit of cytochrome bc1 complex (Ubiquinol-cytochrome c reductase)"/>
    <property type="match status" value="1"/>
</dbReference>
<dbReference type="SUPFAM" id="SSF81342">
    <property type="entry name" value="Transmembrane di-heme cytochromes"/>
    <property type="match status" value="1"/>
</dbReference>
<dbReference type="PROSITE" id="PS51003">
    <property type="entry name" value="CYTB_CTER"/>
    <property type="match status" value="1"/>
</dbReference>
<dbReference type="PROSITE" id="PS51002">
    <property type="entry name" value="CYTB_NTER"/>
    <property type="match status" value="1"/>
</dbReference>
<evidence type="ECO:0000250" key="1"/>
<evidence type="ECO:0000250" key="2">
    <source>
        <dbReference type="UniProtKB" id="P00157"/>
    </source>
</evidence>
<evidence type="ECO:0000250" key="3">
    <source>
        <dbReference type="UniProtKB" id="P00163"/>
    </source>
</evidence>
<evidence type="ECO:0000255" key="4"/>
<evidence type="ECO:0000255" key="5">
    <source>
        <dbReference type="PROSITE-ProRule" id="PRU00967"/>
    </source>
</evidence>
<evidence type="ECO:0000255" key="6">
    <source>
        <dbReference type="PROSITE-ProRule" id="PRU00968"/>
    </source>
</evidence>
<feature type="chain" id="PRO_0000061408" description="Cytochrome b">
    <location>
        <begin position="1"/>
        <end position="376"/>
    </location>
</feature>
<feature type="transmembrane region" description="Helical" evidence="3">
    <location>
        <begin position="28"/>
        <end position="48"/>
    </location>
</feature>
<feature type="transmembrane region" description="Helical" evidence="3">
    <location>
        <begin position="72"/>
        <end position="94"/>
    </location>
</feature>
<feature type="transmembrane region" description="Helical" evidence="3">
    <location>
        <begin position="107"/>
        <end position="127"/>
    </location>
</feature>
<feature type="transmembrane region" description="Helical" evidence="3">
    <location>
        <begin position="169"/>
        <end position="189"/>
    </location>
</feature>
<feature type="transmembrane region" description="Helical" evidence="3">
    <location>
        <begin position="214"/>
        <end position="234"/>
    </location>
</feature>
<feature type="transmembrane region" description="Helical" evidence="4">
    <location>
        <begin position="274"/>
        <end position="294"/>
    </location>
</feature>
<feature type="transmembrane region" description="Helical" evidence="4">
    <location>
        <begin position="317"/>
        <end position="337"/>
    </location>
</feature>
<feature type="transmembrane region" description="Helical" evidence="4">
    <location>
        <begin position="340"/>
        <end position="360"/>
    </location>
</feature>
<feature type="binding site" description="axial binding residue" evidence="3">
    <location>
        <position position="78"/>
    </location>
    <ligand>
        <name>heme b</name>
        <dbReference type="ChEBI" id="CHEBI:60344"/>
        <label>b562</label>
    </ligand>
    <ligandPart>
        <name>Fe</name>
        <dbReference type="ChEBI" id="CHEBI:18248"/>
    </ligandPart>
</feature>
<feature type="binding site" description="axial binding residue" evidence="3">
    <location>
        <position position="92"/>
    </location>
    <ligand>
        <name>heme b</name>
        <dbReference type="ChEBI" id="CHEBI:60344"/>
        <label>b566</label>
    </ligand>
    <ligandPart>
        <name>Fe</name>
        <dbReference type="ChEBI" id="CHEBI:18248"/>
    </ligandPart>
</feature>
<feature type="binding site" description="axial binding residue" evidence="3">
    <location>
        <position position="173"/>
    </location>
    <ligand>
        <name>heme b</name>
        <dbReference type="ChEBI" id="CHEBI:60344"/>
        <label>b562</label>
    </ligand>
    <ligandPart>
        <name>Fe</name>
        <dbReference type="ChEBI" id="CHEBI:18248"/>
    </ligandPart>
</feature>
<feature type="binding site" description="axial binding residue" evidence="3">
    <location>
        <position position="187"/>
    </location>
    <ligand>
        <name>heme b</name>
        <dbReference type="ChEBI" id="CHEBI:60344"/>
        <label>b566</label>
    </ligand>
    <ligandPart>
        <name>Fe</name>
        <dbReference type="ChEBI" id="CHEBI:18248"/>
    </ligandPart>
</feature>
<feature type="binding site" evidence="2">
    <location>
        <position position="192"/>
    </location>
    <ligand>
        <name>a ubiquinone</name>
        <dbReference type="ChEBI" id="CHEBI:16389"/>
    </ligand>
</feature>
<protein>
    <recommendedName>
        <fullName>Cytochrome b</fullName>
    </recommendedName>
    <alternativeName>
        <fullName>Complex III subunit 3</fullName>
    </alternativeName>
    <alternativeName>
        <fullName>Complex III subunit III</fullName>
    </alternativeName>
    <alternativeName>
        <fullName>Cytochrome b-c1 complex subunit 3</fullName>
    </alternativeName>
    <alternativeName>
        <fullName>Ubiquinol-cytochrome-c reductase complex cytochrome b subunit</fullName>
    </alternativeName>
</protein>
<comment type="function">
    <text evidence="3">Component of the ubiquinol-cytochrome c reductase complex (complex III or cytochrome b-c1 complex) that is part of the mitochondrial respiratory chain. The b-c1 complex mediates electron transfer from ubiquinol to cytochrome c. Contributes to the generation of a proton gradient across the mitochondrial membrane that is then used for ATP synthesis.</text>
</comment>
<comment type="cofactor">
    <cofactor evidence="3">
        <name>heme b</name>
        <dbReference type="ChEBI" id="CHEBI:60344"/>
    </cofactor>
    <text evidence="3">Binds 2 heme b groups non-covalently.</text>
</comment>
<comment type="subunit">
    <text evidence="1">The main subunits of complex b-c1 are: cytochrome b, cytochrome c1 and the Rieske protein.</text>
</comment>
<comment type="subcellular location">
    <subcellularLocation>
        <location evidence="3">Mitochondrion inner membrane</location>
        <topology evidence="3">Multi-pass membrane protein</topology>
    </subcellularLocation>
</comment>
<comment type="miscellaneous">
    <text evidence="1">Heme 1 (or BL or b562) is low-potential and absorbs at about 562 nm, and heme 2 (or BH or b566) is high-potential and absorbs at about 566 nm.</text>
</comment>
<comment type="similarity">
    <text evidence="5 6">Belongs to the cytochrome b family.</text>
</comment>
<comment type="caution">
    <text evidence="3">The protein contains an even number of transmembrane helices, fewer than predicted by bioinformatics tools.</text>
</comment>
<organism>
    <name type="scientific">Plasmodium chabaudi</name>
    <dbReference type="NCBI Taxonomy" id="5825"/>
    <lineage>
        <taxon>Eukaryota</taxon>
        <taxon>Sar</taxon>
        <taxon>Alveolata</taxon>
        <taxon>Apicomplexa</taxon>
        <taxon>Aconoidasida</taxon>
        <taxon>Haemosporida</taxon>
        <taxon>Plasmodiidae</taxon>
        <taxon>Plasmodium</taxon>
        <taxon>Plasmodium (Vinckeia)</taxon>
    </lineage>
</organism>
<gene>
    <name type="primary">MT-CYB</name>
    <name type="synonym">COB</name>
    <name type="synonym">CYTB</name>
    <name type="synonym">MTCYB</name>
</gene>
<name>CYB_PLACH</name>
<keyword id="KW-0249">Electron transport</keyword>
<keyword id="KW-0349">Heme</keyword>
<keyword id="KW-0408">Iron</keyword>
<keyword id="KW-0472">Membrane</keyword>
<keyword id="KW-0479">Metal-binding</keyword>
<keyword id="KW-0496">Mitochondrion</keyword>
<keyword id="KW-0999">Mitochondrion inner membrane</keyword>
<keyword id="KW-0679">Respiratory chain</keyword>
<keyword id="KW-0812">Transmembrane</keyword>
<keyword id="KW-1133">Transmembrane helix</keyword>
<keyword id="KW-0813">Transport</keyword>
<keyword id="KW-0830">Ubiquinone</keyword>